<sequence>MNTLDFVDEKSLRSDVPDFRPGDTLNVHVKVIEGSKERIQVFKGVVIRRQGGGIRETFTVRKVSFGVGVERTFPVHSPNIDHIDVVTRGDVRRAKLYYLRDLRGKAAKIKEKR</sequence>
<protein>
    <recommendedName>
        <fullName evidence="1">Large ribosomal subunit protein bL19</fullName>
    </recommendedName>
    <alternativeName>
        <fullName evidence="2">50S ribosomal protein L19</fullName>
    </alternativeName>
</protein>
<comment type="function">
    <text evidence="1">This protein is located at the 30S-50S ribosomal subunit interface and may play a role in the structure and function of the aminoacyl-tRNA binding site.</text>
</comment>
<comment type="similarity">
    <text evidence="1">Belongs to the bacterial ribosomal protein bL19 family.</text>
</comment>
<dbReference type="EMBL" id="AP006618">
    <property type="protein sequence ID" value="BAD58996.1"/>
    <property type="molecule type" value="Genomic_DNA"/>
</dbReference>
<dbReference type="RefSeq" id="WP_011210681.1">
    <property type="nucleotide sequence ID" value="NC_006361.1"/>
</dbReference>
<dbReference type="SMR" id="Q5YS45"/>
<dbReference type="STRING" id="247156.NFA_41470"/>
<dbReference type="GeneID" id="86965838"/>
<dbReference type="KEGG" id="nfa:NFA_41470"/>
<dbReference type="eggNOG" id="COG0335">
    <property type="taxonomic scope" value="Bacteria"/>
</dbReference>
<dbReference type="HOGENOM" id="CLU_103507_2_1_11"/>
<dbReference type="OrthoDB" id="9803541at2"/>
<dbReference type="Proteomes" id="UP000006820">
    <property type="component" value="Chromosome"/>
</dbReference>
<dbReference type="GO" id="GO:0022625">
    <property type="term" value="C:cytosolic large ribosomal subunit"/>
    <property type="evidence" value="ECO:0007669"/>
    <property type="project" value="TreeGrafter"/>
</dbReference>
<dbReference type="GO" id="GO:0003735">
    <property type="term" value="F:structural constituent of ribosome"/>
    <property type="evidence" value="ECO:0007669"/>
    <property type="project" value="InterPro"/>
</dbReference>
<dbReference type="GO" id="GO:0006412">
    <property type="term" value="P:translation"/>
    <property type="evidence" value="ECO:0007669"/>
    <property type="project" value="UniProtKB-UniRule"/>
</dbReference>
<dbReference type="FunFam" id="2.30.30.790:FF:000001">
    <property type="entry name" value="50S ribosomal protein L19"/>
    <property type="match status" value="1"/>
</dbReference>
<dbReference type="Gene3D" id="2.30.30.790">
    <property type="match status" value="1"/>
</dbReference>
<dbReference type="HAMAP" id="MF_00402">
    <property type="entry name" value="Ribosomal_bL19"/>
    <property type="match status" value="1"/>
</dbReference>
<dbReference type="InterPro" id="IPR001857">
    <property type="entry name" value="Ribosomal_bL19"/>
</dbReference>
<dbReference type="InterPro" id="IPR018257">
    <property type="entry name" value="Ribosomal_bL19_CS"/>
</dbReference>
<dbReference type="InterPro" id="IPR038657">
    <property type="entry name" value="Ribosomal_bL19_sf"/>
</dbReference>
<dbReference type="InterPro" id="IPR008991">
    <property type="entry name" value="Translation_prot_SH3-like_sf"/>
</dbReference>
<dbReference type="NCBIfam" id="TIGR01024">
    <property type="entry name" value="rplS_bact"/>
    <property type="match status" value="1"/>
</dbReference>
<dbReference type="PANTHER" id="PTHR15680:SF9">
    <property type="entry name" value="LARGE RIBOSOMAL SUBUNIT PROTEIN BL19M"/>
    <property type="match status" value="1"/>
</dbReference>
<dbReference type="PANTHER" id="PTHR15680">
    <property type="entry name" value="RIBOSOMAL PROTEIN L19"/>
    <property type="match status" value="1"/>
</dbReference>
<dbReference type="Pfam" id="PF01245">
    <property type="entry name" value="Ribosomal_L19"/>
    <property type="match status" value="1"/>
</dbReference>
<dbReference type="PIRSF" id="PIRSF002191">
    <property type="entry name" value="Ribosomal_L19"/>
    <property type="match status" value="1"/>
</dbReference>
<dbReference type="PRINTS" id="PR00061">
    <property type="entry name" value="RIBOSOMALL19"/>
</dbReference>
<dbReference type="SUPFAM" id="SSF50104">
    <property type="entry name" value="Translation proteins SH3-like domain"/>
    <property type="match status" value="1"/>
</dbReference>
<dbReference type="PROSITE" id="PS01015">
    <property type="entry name" value="RIBOSOMAL_L19"/>
    <property type="match status" value="1"/>
</dbReference>
<organism>
    <name type="scientific">Nocardia farcinica (strain IFM 10152)</name>
    <dbReference type="NCBI Taxonomy" id="247156"/>
    <lineage>
        <taxon>Bacteria</taxon>
        <taxon>Bacillati</taxon>
        <taxon>Actinomycetota</taxon>
        <taxon>Actinomycetes</taxon>
        <taxon>Mycobacteriales</taxon>
        <taxon>Nocardiaceae</taxon>
        <taxon>Nocardia</taxon>
    </lineage>
</organism>
<accession>Q5YS45</accession>
<name>RL19_NOCFA</name>
<reference key="1">
    <citation type="journal article" date="2004" name="Proc. Natl. Acad. Sci. U.S.A.">
        <title>The complete genomic sequence of Nocardia farcinica IFM 10152.</title>
        <authorList>
            <person name="Ishikawa J."/>
            <person name="Yamashita A."/>
            <person name="Mikami Y."/>
            <person name="Hoshino Y."/>
            <person name="Kurita H."/>
            <person name="Hotta K."/>
            <person name="Shiba T."/>
            <person name="Hattori M."/>
        </authorList>
    </citation>
    <scope>NUCLEOTIDE SEQUENCE [LARGE SCALE GENOMIC DNA]</scope>
    <source>
        <strain>IFM 10152</strain>
    </source>
</reference>
<proteinExistence type="inferred from homology"/>
<feature type="chain" id="PRO_0000163498" description="Large ribosomal subunit protein bL19">
    <location>
        <begin position="1"/>
        <end position="113"/>
    </location>
</feature>
<gene>
    <name evidence="1" type="primary">rplS</name>
    <name type="ordered locus">NFA_41470</name>
</gene>
<keyword id="KW-1185">Reference proteome</keyword>
<keyword id="KW-0687">Ribonucleoprotein</keyword>
<keyword id="KW-0689">Ribosomal protein</keyword>
<evidence type="ECO:0000255" key="1">
    <source>
        <dbReference type="HAMAP-Rule" id="MF_00402"/>
    </source>
</evidence>
<evidence type="ECO:0000305" key="2"/>